<protein>
    <recommendedName>
        <fullName evidence="1">Imidazole glycerol phosphate synthase subunit HisH</fullName>
        <ecNumber evidence="1">4.3.2.10</ecNumber>
    </recommendedName>
    <alternativeName>
        <fullName evidence="1">IGP synthase glutaminase subunit</fullName>
        <ecNumber evidence="1">3.5.1.2</ecNumber>
    </alternativeName>
    <alternativeName>
        <fullName evidence="1">IGP synthase subunit HisH</fullName>
    </alternativeName>
    <alternativeName>
        <fullName evidence="1">ImGP synthase subunit HisH</fullName>
        <shortName evidence="1">IGPS subunit HisH</shortName>
    </alternativeName>
</protein>
<proteinExistence type="inferred from homology"/>
<reference key="1">
    <citation type="journal article" date="2007" name="J. Bacteriol.">
        <title>Genome of the opportunistic pathogen Streptococcus sanguinis.</title>
        <authorList>
            <person name="Xu P."/>
            <person name="Alves J.M."/>
            <person name="Kitten T."/>
            <person name="Brown A."/>
            <person name="Chen Z."/>
            <person name="Ozaki L.S."/>
            <person name="Manque P."/>
            <person name="Ge X."/>
            <person name="Serrano M.G."/>
            <person name="Puiu D."/>
            <person name="Hendricks S."/>
            <person name="Wang Y."/>
            <person name="Chaplin M.D."/>
            <person name="Akan D."/>
            <person name="Paik S."/>
            <person name="Peterson D.L."/>
            <person name="Macrina F.L."/>
            <person name="Buck G.A."/>
        </authorList>
    </citation>
    <scope>NUCLEOTIDE SEQUENCE [LARGE SCALE GENOMIC DNA]</scope>
    <source>
        <strain>SK36</strain>
    </source>
</reference>
<dbReference type="EC" id="4.3.2.10" evidence="1"/>
<dbReference type="EC" id="3.5.1.2" evidence="1"/>
<dbReference type="EMBL" id="CP000387">
    <property type="protein sequence ID" value="ABN44837.1"/>
    <property type="molecule type" value="Genomic_DNA"/>
</dbReference>
<dbReference type="RefSeq" id="WP_011837140.1">
    <property type="nucleotide sequence ID" value="NC_009009.1"/>
</dbReference>
<dbReference type="RefSeq" id="YP_001035387.1">
    <property type="nucleotide sequence ID" value="NC_009009.1"/>
</dbReference>
<dbReference type="SMR" id="A3CNT2"/>
<dbReference type="STRING" id="388919.SSA_1444"/>
<dbReference type="KEGG" id="ssa:SSA_1444"/>
<dbReference type="PATRIC" id="fig|388919.9.peg.1369"/>
<dbReference type="eggNOG" id="COG0118">
    <property type="taxonomic scope" value="Bacteria"/>
</dbReference>
<dbReference type="HOGENOM" id="CLU_071837_2_2_9"/>
<dbReference type="OrthoDB" id="9807137at2"/>
<dbReference type="UniPathway" id="UPA00031">
    <property type="reaction ID" value="UER00010"/>
</dbReference>
<dbReference type="Proteomes" id="UP000002148">
    <property type="component" value="Chromosome"/>
</dbReference>
<dbReference type="GO" id="GO:0005737">
    <property type="term" value="C:cytoplasm"/>
    <property type="evidence" value="ECO:0007669"/>
    <property type="project" value="UniProtKB-SubCell"/>
</dbReference>
<dbReference type="GO" id="GO:0004359">
    <property type="term" value="F:glutaminase activity"/>
    <property type="evidence" value="ECO:0007669"/>
    <property type="project" value="UniProtKB-EC"/>
</dbReference>
<dbReference type="GO" id="GO:0000107">
    <property type="term" value="F:imidazoleglycerol-phosphate synthase activity"/>
    <property type="evidence" value="ECO:0007669"/>
    <property type="project" value="UniProtKB-UniRule"/>
</dbReference>
<dbReference type="GO" id="GO:0016829">
    <property type="term" value="F:lyase activity"/>
    <property type="evidence" value="ECO:0007669"/>
    <property type="project" value="UniProtKB-KW"/>
</dbReference>
<dbReference type="GO" id="GO:0000105">
    <property type="term" value="P:L-histidine biosynthetic process"/>
    <property type="evidence" value="ECO:0007669"/>
    <property type="project" value="UniProtKB-UniRule"/>
</dbReference>
<dbReference type="CDD" id="cd01748">
    <property type="entry name" value="GATase1_IGP_Synthase"/>
    <property type="match status" value="1"/>
</dbReference>
<dbReference type="Gene3D" id="3.40.50.880">
    <property type="match status" value="1"/>
</dbReference>
<dbReference type="HAMAP" id="MF_00278">
    <property type="entry name" value="HisH"/>
    <property type="match status" value="1"/>
</dbReference>
<dbReference type="InterPro" id="IPR029062">
    <property type="entry name" value="Class_I_gatase-like"/>
</dbReference>
<dbReference type="InterPro" id="IPR017926">
    <property type="entry name" value="GATASE"/>
</dbReference>
<dbReference type="InterPro" id="IPR010139">
    <property type="entry name" value="Imidazole-glycPsynth_HisH"/>
</dbReference>
<dbReference type="NCBIfam" id="TIGR01855">
    <property type="entry name" value="IMP_synth_hisH"/>
    <property type="match status" value="1"/>
</dbReference>
<dbReference type="PANTHER" id="PTHR42701">
    <property type="entry name" value="IMIDAZOLE GLYCEROL PHOSPHATE SYNTHASE SUBUNIT HISH"/>
    <property type="match status" value="1"/>
</dbReference>
<dbReference type="PANTHER" id="PTHR42701:SF1">
    <property type="entry name" value="IMIDAZOLE GLYCEROL PHOSPHATE SYNTHASE SUBUNIT HISH"/>
    <property type="match status" value="1"/>
</dbReference>
<dbReference type="Pfam" id="PF00117">
    <property type="entry name" value="GATase"/>
    <property type="match status" value="1"/>
</dbReference>
<dbReference type="PIRSF" id="PIRSF000495">
    <property type="entry name" value="Amidotransf_hisH"/>
    <property type="match status" value="1"/>
</dbReference>
<dbReference type="SUPFAM" id="SSF52317">
    <property type="entry name" value="Class I glutamine amidotransferase-like"/>
    <property type="match status" value="1"/>
</dbReference>
<dbReference type="PROSITE" id="PS51273">
    <property type="entry name" value="GATASE_TYPE_1"/>
    <property type="match status" value="1"/>
</dbReference>
<comment type="function">
    <text evidence="1">IGPS catalyzes the conversion of PRFAR and glutamine to IGP, AICAR and glutamate. The HisH subunit catalyzes the hydrolysis of glutamine to glutamate and ammonia as part of the synthesis of IGP and AICAR. The resulting ammonia molecule is channeled to the active site of HisF.</text>
</comment>
<comment type="catalytic activity">
    <reaction evidence="1">
        <text>5-[(5-phospho-1-deoxy-D-ribulos-1-ylimino)methylamino]-1-(5-phospho-beta-D-ribosyl)imidazole-4-carboxamide + L-glutamine = D-erythro-1-(imidazol-4-yl)glycerol 3-phosphate + 5-amino-1-(5-phospho-beta-D-ribosyl)imidazole-4-carboxamide + L-glutamate + H(+)</text>
        <dbReference type="Rhea" id="RHEA:24793"/>
        <dbReference type="ChEBI" id="CHEBI:15378"/>
        <dbReference type="ChEBI" id="CHEBI:29985"/>
        <dbReference type="ChEBI" id="CHEBI:58278"/>
        <dbReference type="ChEBI" id="CHEBI:58359"/>
        <dbReference type="ChEBI" id="CHEBI:58475"/>
        <dbReference type="ChEBI" id="CHEBI:58525"/>
        <dbReference type="EC" id="4.3.2.10"/>
    </reaction>
</comment>
<comment type="catalytic activity">
    <reaction evidence="1">
        <text>L-glutamine + H2O = L-glutamate + NH4(+)</text>
        <dbReference type="Rhea" id="RHEA:15889"/>
        <dbReference type="ChEBI" id="CHEBI:15377"/>
        <dbReference type="ChEBI" id="CHEBI:28938"/>
        <dbReference type="ChEBI" id="CHEBI:29985"/>
        <dbReference type="ChEBI" id="CHEBI:58359"/>
        <dbReference type="EC" id="3.5.1.2"/>
    </reaction>
</comment>
<comment type="pathway">
    <text evidence="1">Amino-acid biosynthesis; L-histidine biosynthesis; L-histidine from 5-phospho-alpha-D-ribose 1-diphosphate: step 5/9.</text>
</comment>
<comment type="subunit">
    <text evidence="1">Heterodimer of HisH and HisF.</text>
</comment>
<comment type="subcellular location">
    <subcellularLocation>
        <location evidence="1">Cytoplasm</location>
    </subcellularLocation>
</comment>
<feature type="chain" id="PRO_1000114792" description="Imidazole glycerol phosphate synthase subunit HisH">
    <location>
        <begin position="1"/>
        <end position="207"/>
    </location>
</feature>
<feature type="domain" description="Glutamine amidotransferase type-1" evidence="1">
    <location>
        <begin position="1"/>
        <end position="206"/>
    </location>
</feature>
<feature type="active site" description="Nucleophile" evidence="1">
    <location>
        <position position="79"/>
    </location>
</feature>
<feature type="active site" evidence="1">
    <location>
        <position position="181"/>
    </location>
</feature>
<feature type="active site" evidence="1">
    <location>
        <position position="183"/>
    </location>
</feature>
<accession>A3CNT2</accession>
<sequence length="207" mass="22351">MMIVIDYDAGNTANVLRALAQVRVEARLSADPQEILAADGLILPGVGAFPTAMQELERRGLVSVIQQAVADGKPLLGICLGMQLLLESGLENGQSSGLGLIPGVCRRIPDQAGLPVPHMGWNDLQMQQSSALTASLEGQSVYFVHSYYTDVPEEYLDVTADYGLPIPAMIHRGSVFGCQFHPEKSGAVGLGILEKFKEYVYENTARY</sequence>
<gene>
    <name evidence="1" type="primary">hisH</name>
    <name type="ordered locus">SSA_1444</name>
</gene>
<organism>
    <name type="scientific">Streptococcus sanguinis (strain SK36)</name>
    <dbReference type="NCBI Taxonomy" id="388919"/>
    <lineage>
        <taxon>Bacteria</taxon>
        <taxon>Bacillati</taxon>
        <taxon>Bacillota</taxon>
        <taxon>Bacilli</taxon>
        <taxon>Lactobacillales</taxon>
        <taxon>Streptococcaceae</taxon>
        <taxon>Streptococcus</taxon>
    </lineage>
</organism>
<keyword id="KW-0028">Amino-acid biosynthesis</keyword>
<keyword id="KW-0963">Cytoplasm</keyword>
<keyword id="KW-0315">Glutamine amidotransferase</keyword>
<keyword id="KW-0368">Histidine biosynthesis</keyword>
<keyword id="KW-0378">Hydrolase</keyword>
<keyword id="KW-0456">Lyase</keyword>
<keyword id="KW-1185">Reference proteome</keyword>
<evidence type="ECO:0000255" key="1">
    <source>
        <dbReference type="HAMAP-Rule" id="MF_00278"/>
    </source>
</evidence>
<name>HIS5_STRSV</name>